<organism>
    <name type="scientific">Mycobacterium bovis (strain ATCC BAA-935 / AF2122/97)</name>
    <dbReference type="NCBI Taxonomy" id="233413"/>
    <lineage>
        <taxon>Bacteria</taxon>
        <taxon>Bacillati</taxon>
        <taxon>Actinomycetota</taxon>
        <taxon>Actinomycetes</taxon>
        <taxon>Mycobacteriales</taxon>
        <taxon>Mycobacteriaceae</taxon>
        <taxon>Mycobacterium</taxon>
        <taxon>Mycobacterium tuberculosis complex</taxon>
    </lineage>
</organism>
<name>Y1859_MYCBO</name>
<proteinExistence type="inferred from homology"/>
<protein>
    <recommendedName>
        <fullName>Uncharacterized HTH-type transcriptional regulator Mb1859</fullName>
    </recommendedName>
</protein>
<feature type="chain" id="PRO_0000098169" description="Uncharacterized HTH-type transcriptional regulator Mb1859">
    <location>
        <begin position="1"/>
        <end position="247"/>
    </location>
</feature>
<feature type="domain" description="HTH merR-type" evidence="2">
    <location>
        <begin position="11"/>
        <end position="85"/>
    </location>
</feature>
<feature type="DNA-binding region" description="H-T-H motif" evidence="2">
    <location>
        <begin position="14"/>
        <end position="38"/>
    </location>
</feature>
<accession>P67670</accession>
<accession>A0A1R3XZE8</accession>
<accession>Q50605</accession>
<accession>X2BJ64</accession>
<evidence type="ECO:0000250" key="1">
    <source>
        <dbReference type="UniProtKB" id="P9WME7"/>
    </source>
</evidence>
<evidence type="ECO:0000255" key="2">
    <source>
        <dbReference type="PROSITE-ProRule" id="PRU00254"/>
    </source>
</evidence>
<gene>
    <name type="ordered locus">BQ2027_MB1859</name>
</gene>
<reference key="1">
    <citation type="journal article" date="2003" name="Proc. Natl. Acad. Sci. U.S.A.">
        <title>The complete genome sequence of Mycobacterium bovis.</title>
        <authorList>
            <person name="Garnier T."/>
            <person name="Eiglmeier K."/>
            <person name="Camus J.-C."/>
            <person name="Medina N."/>
            <person name="Mansoor H."/>
            <person name="Pryor M."/>
            <person name="Duthoy S."/>
            <person name="Grondin S."/>
            <person name="Lacroix C."/>
            <person name="Monsempe C."/>
            <person name="Simon S."/>
            <person name="Harris B."/>
            <person name="Atkin R."/>
            <person name="Doggett J."/>
            <person name="Mayes R."/>
            <person name="Keating L."/>
            <person name="Wheeler P.R."/>
            <person name="Parkhill J."/>
            <person name="Barrell B.G."/>
            <person name="Cole S.T."/>
            <person name="Gordon S.V."/>
            <person name="Hewinson R.G."/>
        </authorList>
    </citation>
    <scope>NUCLEOTIDE SEQUENCE [LARGE SCALE GENOMIC DNA]</scope>
    <source>
        <strain>ATCC BAA-935 / AF2122/97</strain>
    </source>
</reference>
<reference key="2">
    <citation type="journal article" date="2017" name="Genome Announc.">
        <title>Updated reference genome sequence and annotation of Mycobacterium bovis AF2122/97.</title>
        <authorList>
            <person name="Malone K.M."/>
            <person name="Farrell D."/>
            <person name="Stuber T.P."/>
            <person name="Schubert O.T."/>
            <person name="Aebersold R."/>
            <person name="Robbe-Austerman S."/>
            <person name="Gordon S.V."/>
        </authorList>
    </citation>
    <scope>NUCLEOTIDE SEQUENCE [LARGE SCALE GENOMIC DNA]</scope>
    <scope>GENOME REANNOTATION</scope>
    <source>
        <strain>ATCC BAA-935 / AF2122/97</strain>
    </source>
</reference>
<keyword id="KW-0238">DNA-binding</keyword>
<keyword id="KW-1185">Reference proteome</keyword>
<keyword id="KW-0804">Transcription</keyword>
<keyword id="KW-0805">Transcription regulation</keyword>
<dbReference type="EMBL" id="LT708304">
    <property type="protein sequence ID" value="SIU00463.1"/>
    <property type="molecule type" value="Genomic_DNA"/>
</dbReference>
<dbReference type="RefSeq" id="NP_855511.1">
    <property type="nucleotide sequence ID" value="NC_002945.3"/>
</dbReference>
<dbReference type="RefSeq" id="WP_003409239.1">
    <property type="nucleotide sequence ID" value="NC_002945.4"/>
</dbReference>
<dbReference type="SMR" id="P67670"/>
<dbReference type="KEGG" id="mbo:BQ2027_MB1859"/>
<dbReference type="PATRIC" id="fig|233413.5.peg.2039"/>
<dbReference type="Proteomes" id="UP000001419">
    <property type="component" value="Chromosome"/>
</dbReference>
<dbReference type="GO" id="GO:0003677">
    <property type="term" value="F:DNA binding"/>
    <property type="evidence" value="ECO:0007669"/>
    <property type="project" value="UniProtKB-KW"/>
</dbReference>
<dbReference type="GO" id="GO:0003700">
    <property type="term" value="F:DNA-binding transcription factor activity"/>
    <property type="evidence" value="ECO:0007669"/>
    <property type="project" value="InterPro"/>
</dbReference>
<dbReference type="CDD" id="cd00592">
    <property type="entry name" value="HTH_MerR-like"/>
    <property type="match status" value="1"/>
</dbReference>
<dbReference type="FunFam" id="1.10.1660.10:FF:000011">
    <property type="entry name" value="MerR family transcriptional regulator"/>
    <property type="match status" value="1"/>
</dbReference>
<dbReference type="Gene3D" id="1.10.1660.10">
    <property type="match status" value="1"/>
</dbReference>
<dbReference type="InterPro" id="IPR009061">
    <property type="entry name" value="DNA-bd_dom_put_sf"/>
</dbReference>
<dbReference type="InterPro" id="IPR000551">
    <property type="entry name" value="MerR-type_HTH_dom"/>
</dbReference>
<dbReference type="InterPro" id="IPR047057">
    <property type="entry name" value="MerR_fam"/>
</dbReference>
<dbReference type="PANTHER" id="PTHR30204:SF89">
    <property type="entry name" value="HTH MERR-TYPE DOMAIN-CONTAINING PROTEIN"/>
    <property type="match status" value="1"/>
</dbReference>
<dbReference type="PANTHER" id="PTHR30204">
    <property type="entry name" value="REDOX-CYCLING DRUG-SENSING TRANSCRIPTIONAL ACTIVATOR SOXR"/>
    <property type="match status" value="1"/>
</dbReference>
<dbReference type="Pfam" id="PF13411">
    <property type="entry name" value="MerR_1"/>
    <property type="match status" value="1"/>
</dbReference>
<dbReference type="SMART" id="SM00422">
    <property type="entry name" value="HTH_MERR"/>
    <property type="match status" value="1"/>
</dbReference>
<dbReference type="SUPFAM" id="SSF46955">
    <property type="entry name" value="Putative DNA-binding domain"/>
    <property type="match status" value="1"/>
</dbReference>
<dbReference type="PROSITE" id="PS50937">
    <property type="entry name" value="HTH_MERR_2"/>
    <property type="match status" value="1"/>
</dbReference>
<sequence>MSAPDSPALAGMSIGAVLDLLRPDFPDVTISKIRFLEAEGLVTPRRASSGYRRFTAYDCARLRFILTAQRDHYLPLKVIRAQLDAQPDGELPPFGSPYVLPRLVPVAGDSAGGVGSDTASVSLTGIRLSREDLLERSEVADELLTALLKAGVITTGPGGFFDEHAVVILQCARALAEYGVEPRHLRAFRSAADRQSDLIAQIAGPLVKAGKAGARDRADDLAREVAALAITLHTSLIKSAVRDVLHR</sequence>
<comment type="subunit">
    <text evidence="1">Homodimer.</text>
</comment>
<comment type="domain">
    <text evidence="1">Contains an N-terminal DNA-binding domain, a linker region and a C-terminal effector binding domain. Dimerization is mediated via the C-terminal domain.</text>
</comment>